<name>CLPS_HERAR</name>
<protein>
    <recommendedName>
        <fullName evidence="1">ATP-dependent Clp protease adapter protein ClpS</fullName>
    </recommendedName>
</protein>
<gene>
    <name evidence="1" type="primary">clpS</name>
    <name type="ordered locus">HEAR2446</name>
</gene>
<reference key="1">
    <citation type="journal article" date="2007" name="PLoS Genet.">
        <title>A tale of two oxidation states: bacterial colonization of arsenic-rich environments.</title>
        <authorList>
            <person name="Muller D."/>
            <person name="Medigue C."/>
            <person name="Koechler S."/>
            <person name="Barbe V."/>
            <person name="Barakat M."/>
            <person name="Talla E."/>
            <person name="Bonnefoy V."/>
            <person name="Krin E."/>
            <person name="Arsene-Ploetze F."/>
            <person name="Carapito C."/>
            <person name="Chandler M."/>
            <person name="Cournoyer B."/>
            <person name="Cruveiller S."/>
            <person name="Dossat C."/>
            <person name="Duval S."/>
            <person name="Heymann M."/>
            <person name="Leize E."/>
            <person name="Lieutaud A."/>
            <person name="Lievremont D."/>
            <person name="Makita Y."/>
            <person name="Mangenot S."/>
            <person name="Nitschke W."/>
            <person name="Ortet P."/>
            <person name="Perdrial N."/>
            <person name="Schoepp B."/>
            <person name="Siguier P."/>
            <person name="Simeonova D.D."/>
            <person name="Rouy Z."/>
            <person name="Segurens B."/>
            <person name="Turlin E."/>
            <person name="Vallenet D."/>
            <person name="van Dorsselaer A."/>
            <person name="Weiss S."/>
            <person name="Weissenbach J."/>
            <person name="Lett M.-C."/>
            <person name="Danchin A."/>
            <person name="Bertin P.N."/>
        </authorList>
    </citation>
    <scope>NUCLEOTIDE SEQUENCE [LARGE SCALE GENOMIC DNA]</scope>
    <source>
        <strain>ULPAs1</strain>
    </source>
</reference>
<feature type="chain" id="PRO_1000132810" description="ATP-dependent Clp protease adapter protein ClpS">
    <location>
        <begin position="1"/>
        <end position="102"/>
    </location>
</feature>
<dbReference type="EMBL" id="CU207211">
    <property type="protein sequence ID" value="CAL62576.1"/>
    <property type="molecule type" value="Genomic_DNA"/>
</dbReference>
<dbReference type="SMR" id="A4G7T9"/>
<dbReference type="STRING" id="204773.HEAR2446"/>
<dbReference type="KEGG" id="har:HEAR2446"/>
<dbReference type="eggNOG" id="COG2127">
    <property type="taxonomic scope" value="Bacteria"/>
</dbReference>
<dbReference type="HOGENOM" id="CLU_134358_2_1_4"/>
<dbReference type="OrthoDB" id="9796121at2"/>
<dbReference type="Proteomes" id="UP000006697">
    <property type="component" value="Chromosome"/>
</dbReference>
<dbReference type="GO" id="GO:0030163">
    <property type="term" value="P:protein catabolic process"/>
    <property type="evidence" value="ECO:0007669"/>
    <property type="project" value="InterPro"/>
</dbReference>
<dbReference type="GO" id="GO:0006508">
    <property type="term" value="P:proteolysis"/>
    <property type="evidence" value="ECO:0007669"/>
    <property type="project" value="UniProtKB-UniRule"/>
</dbReference>
<dbReference type="FunFam" id="3.30.1390.10:FF:000002">
    <property type="entry name" value="ATP-dependent Clp protease adapter protein ClpS"/>
    <property type="match status" value="1"/>
</dbReference>
<dbReference type="Gene3D" id="3.30.1390.10">
    <property type="match status" value="1"/>
</dbReference>
<dbReference type="HAMAP" id="MF_00302">
    <property type="entry name" value="ClpS"/>
    <property type="match status" value="1"/>
</dbReference>
<dbReference type="InterPro" id="IPR022935">
    <property type="entry name" value="ClpS"/>
</dbReference>
<dbReference type="InterPro" id="IPR003769">
    <property type="entry name" value="ClpS_core"/>
</dbReference>
<dbReference type="InterPro" id="IPR014719">
    <property type="entry name" value="Ribosomal_bL12_C/ClpS-like"/>
</dbReference>
<dbReference type="NCBIfam" id="NF000672">
    <property type="entry name" value="PRK00033.1-5"/>
    <property type="match status" value="1"/>
</dbReference>
<dbReference type="PANTHER" id="PTHR33473:SF19">
    <property type="entry name" value="ATP-DEPENDENT CLP PROTEASE ADAPTER PROTEIN CLPS"/>
    <property type="match status" value="1"/>
</dbReference>
<dbReference type="PANTHER" id="PTHR33473">
    <property type="entry name" value="ATP-DEPENDENT CLP PROTEASE ADAPTER PROTEIN CLPS1, CHLOROPLASTIC"/>
    <property type="match status" value="1"/>
</dbReference>
<dbReference type="Pfam" id="PF02617">
    <property type="entry name" value="ClpS"/>
    <property type="match status" value="1"/>
</dbReference>
<dbReference type="SUPFAM" id="SSF54736">
    <property type="entry name" value="ClpS-like"/>
    <property type="match status" value="1"/>
</dbReference>
<accession>A4G7T9</accession>
<sequence>MAIKHDDGTVLMRQEQKLKPPSMYQVLLLNDDYTPMEFVVMILQEYFSKDRETATQIMLMVHRDGKGICGVYPKDIASTKVELVLNHARKAGHPLQCVMEEV</sequence>
<comment type="function">
    <text evidence="1">Involved in the modulation of the specificity of the ClpAP-mediated ATP-dependent protein degradation.</text>
</comment>
<comment type="subunit">
    <text evidence="1">Binds to the N-terminal domain of the chaperone ClpA.</text>
</comment>
<comment type="similarity">
    <text evidence="1">Belongs to the ClpS family.</text>
</comment>
<evidence type="ECO:0000255" key="1">
    <source>
        <dbReference type="HAMAP-Rule" id="MF_00302"/>
    </source>
</evidence>
<organism>
    <name type="scientific">Herminiimonas arsenicoxydans</name>
    <dbReference type="NCBI Taxonomy" id="204773"/>
    <lineage>
        <taxon>Bacteria</taxon>
        <taxon>Pseudomonadati</taxon>
        <taxon>Pseudomonadota</taxon>
        <taxon>Betaproteobacteria</taxon>
        <taxon>Burkholderiales</taxon>
        <taxon>Oxalobacteraceae</taxon>
        <taxon>Herminiimonas</taxon>
    </lineage>
</organism>
<keyword id="KW-1185">Reference proteome</keyword>
<proteinExistence type="inferred from homology"/>